<name>RRF_ECO45</name>
<evidence type="ECO:0000255" key="1">
    <source>
        <dbReference type="HAMAP-Rule" id="MF_00040"/>
    </source>
</evidence>
<protein>
    <recommendedName>
        <fullName evidence="1">Ribosome-recycling factor</fullName>
        <shortName evidence="1">RRF</shortName>
    </recommendedName>
    <alternativeName>
        <fullName evidence="1">Ribosome-releasing factor</fullName>
    </alternativeName>
</protein>
<keyword id="KW-0007">Acetylation</keyword>
<keyword id="KW-0963">Cytoplasm</keyword>
<keyword id="KW-0648">Protein biosynthesis</keyword>
<keyword id="KW-1185">Reference proteome</keyword>
<proteinExistence type="inferred from homology"/>
<dbReference type="EMBL" id="CU928161">
    <property type="protein sequence ID" value="CAR01547.1"/>
    <property type="molecule type" value="Genomic_DNA"/>
</dbReference>
<dbReference type="RefSeq" id="WP_000622418.1">
    <property type="nucleotide sequence ID" value="NC_011742.1"/>
</dbReference>
<dbReference type="SMR" id="B7MBF3"/>
<dbReference type="GeneID" id="93777253"/>
<dbReference type="KEGG" id="ecz:ECS88_0182"/>
<dbReference type="HOGENOM" id="CLU_073981_2_1_6"/>
<dbReference type="Proteomes" id="UP000000747">
    <property type="component" value="Chromosome"/>
</dbReference>
<dbReference type="GO" id="GO:0005829">
    <property type="term" value="C:cytosol"/>
    <property type="evidence" value="ECO:0007669"/>
    <property type="project" value="GOC"/>
</dbReference>
<dbReference type="GO" id="GO:0043023">
    <property type="term" value="F:ribosomal large subunit binding"/>
    <property type="evidence" value="ECO:0007669"/>
    <property type="project" value="TreeGrafter"/>
</dbReference>
<dbReference type="GO" id="GO:0002184">
    <property type="term" value="P:cytoplasmic translational termination"/>
    <property type="evidence" value="ECO:0007669"/>
    <property type="project" value="TreeGrafter"/>
</dbReference>
<dbReference type="CDD" id="cd00520">
    <property type="entry name" value="RRF"/>
    <property type="match status" value="1"/>
</dbReference>
<dbReference type="FunFam" id="1.10.132.20:FF:000001">
    <property type="entry name" value="Ribosome-recycling factor"/>
    <property type="match status" value="1"/>
</dbReference>
<dbReference type="FunFam" id="3.30.1360.40:FF:000001">
    <property type="entry name" value="Ribosome-recycling factor"/>
    <property type="match status" value="1"/>
</dbReference>
<dbReference type="Gene3D" id="3.30.1360.40">
    <property type="match status" value="1"/>
</dbReference>
<dbReference type="Gene3D" id="1.10.132.20">
    <property type="entry name" value="Ribosome-recycling factor"/>
    <property type="match status" value="1"/>
</dbReference>
<dbReference type="HAMAP" id="MF_00040">
    <property type="entry name" value="RRF"/>
    <property type="match status" value="1"/>
</dbReference>
<dbReference type="InterPro" id="IPR002661">
    <property type="entry name" value="Ribosome_recyc_fac"/>
</dbReference>
<dbReference type="InterPro" id="IPR023584">
    <property type="entry name" value="Ribosome_recyc_fac_dom"/>
</dbReference>
<dbReference type="InterPro" id="IPR036191">
    <property type="entry name" value="RRF_sf"/>
</dbReference>
<dbReference type="NCBIfam" id="TIGR00496">
    <property type="entry name" value="frr"/>
    <property type="match status" value="1"/>
</dbReference>
<dbReference type="PANTHER" id="PTHR20982:SF3">
    <property type="entry name" value="MITOCHONDRIAL RIBOSOME RECYCLING FACTOR PSEUDO 1"/>
    <property type="match status" value="1"/>
</dbReference>
<dbReference type="PANTHER" id="PTHR20982">
    <property type="entry name" value="RIBOSOME RECYCLING FACTOR"/>
    <property type="match status" value="1"/>
</dbReference>
<dbReference type="Pfam" id="PF01765">
    <property type="entry name" value="RRF"/>
    <property type="match status" value="1"/>
</dbReference>
<dbReference type="SUPFAM" id="SSF55194">
    <property type="entry name" value="Ribosome recycling factor, RRF"/>
    <property type="match status" value="1"/>
</dbReference>
<reference key="1">
    <citation type="journal article" date="2009" name="PLoS Genet.">
        <title>Organised genome dynamics in the Escherichia coli species results in highly diverse adaptive paths.</title>
        <authorList>
            <person name="Touchon M."/>
            <person name="Hoede C."/>
            <person name="Tenaillon O."/>
            <person name="Barbe V."/>
            <person name="Baeriswyl S."/>
            <person name="Bidet P."/>
            <person name="Bingen E."/>
            <person name="Bonacorsi S."/>
            <person name="Bouchier C."/>
            <person name="Bouvet O."/>
            <person name="Calteau A."/>
            <person name="Chiapello H."/>
            <person name="Clermont O."/>
            <person name="Cruveiller S."/>
            <person name="Danchin A."/>
            <person name="Diard M."/>
            <person name="Dossat C."/>
            <person name="Karoui M.E."/>
            <person name="Frapy E."/>
            <person name="Garry L."/>
            <person name="Ghigo J.M."/>
            <person name="Gilles A.M."/>
            <person name="Johnson J."/>
            <person name="Le Bouguenec C."/>
            <person name="Lescat M."/>
            <person name="Mangenot S."/>
            <person name="Martinez-Jehanne V."/>
            <person name="Matic I."/>
            <person name="Nassif X."/>
            <person name="Oztas S."/>
            <person name="Petit M.A."/>
            <person name="Pichon C."/>
            <person name="Rouy Z."/>
            <person name="Ruf C.S."/>
            <person name="Schneider D."/>
            <person name="Tourret J."/>
            <person name="Vacherie B."/>
            <person name="Vallenet D."/>
            <person name="Medigue C."/>
            <person name="Rocha E.P.C."/>
            <person name="Denamur E."/>
        </authorList>
    </citation>
    <scope>NUCLEOTIDE SEQUENCE [LARGE SCALE GENOMIC DNA]</scope>
    <source>
        <strain>S88 / ExPEC</strain>
    </source>
</reference>
<gene>
    <name evidence="1" type="primary">frr</name>
    <name type="ordered locus">ECS88_0182</name>
</gene>
<comment type="function">
    <text evidence="1">Responsible for the release of ribosomes from messenger RNA at the termination of protein biosynthesis. May increase the efficiency of translation by recycling ribosomes from one round of translation to another.</text>
</comment>
<comment type="subcellular location">
    <subcellularLocation>
        <location evidence="1">Cytoplasm</location>
    </subcellularLocation>
</comment>
<comment type="similarity">
    <text evidence="1">Belongs to the RRF family.</text>
</comment>
<feature type="chain" id="PRO_1000194927" description="Ribosome-recycling factor">
    <location>
        <begin position="1"/>
        <end position="185"/>
    </location>
</feature>
<feature type="modified residue" description="N6-acetyllysine" evidence="1">
    <location>
        <position position="162"/>
    </location>
</feature>
<sequence length="185" mass="20639">MISDIRKDAEVRMDKCVEAFKTQISKIRTGRASPSLLDGIVVEYYGTPTPLRQLASVTVEDSRTLKINVFDRSMSPAVEKAIMASDLGLNPNSAGSDIRVPLPPLTEERRKDLTKIVRGEAEQARVAVRNVRRDANDKVKALLKDKEISEDDDRRSQDDVQKLTDAAIKKIEAALADKEAELMQF</sequence>
<organism>
    <name type="scientific">Escherichia coli O45:K1 (strain S88 / ExPEC)</name>
    <dbReference type="NCBI Taxonomy" id="585035"/>
    <lineage>
        <taxon>Bacteria</taxon>
        <taxon>Pseudomonadati</taxon>
        <taxon>Pseudomonadota</taxon>
        <taxon>Gammaproteobacteria</taxon>
        <taxon>Enterobacterales</taxon>
        <taxon>Enterobacteriaceae</taxon>
        <taxon>Escherichia</taxon>
    </lineage>
</organism>
<accession>B7MBF3</accession>